<protein>
    <recommendedName>
        <fullName evidence="1">2,3,4,5-tetrahydropyridine-2,6-dicarboxylate N-succinyltransferase</fullName>
        <ecNumber evidence="1">2.3.1.117</ecNumber>
    </recommendedName>
    <alternativeName>
        <fullName evidence="1">Tetrahydrodipicolinate N-succinyltransferase</fullName>
        <shortName evidence="1">THDP succinyltransferase</shortName>
        <shortName evidence="1">THP succinyltransferase</shortName>
        <shortName evidence="1">Tetrahydropicolinate succinylase</shortName>
    </alternativeName>
</protein>
<evidence type="ECO:0000255" key="1">
    <source>
        <dbReference type="HAMAP-Rule" id="MF_00811"/>
    </source>
</evidence>
<gene>
    <name evidence="1" type="primary">dapD</name>
    <name type="ordered locus">RPD_0075</name>
</gene>
<feature type="chain" id="PRO_1000047172" description="2,3,4,5-tetrahydropyridine-2,6-dicarboxylate N-succinyltransferase">
    <location>
        <begin position="1"/>
        <end position="281"/>
    </location>
</feature>
<feature type="binding site" evidence="1">
    <location>
        <position position="108"/>
    </location>
    <ligand>
        <name>substrate</name>
    </ligand>
</feature>
<feature type="binding site" evidence="1">
    <location>
        <position position="145"/>
    </location>
    <ligand>
        <name>substrate</name>
    </ligand>
</feature>
<organism>
    <name type="scientific">Rhodopseudomonas palustris (strain BisB5)</name>
    <dbReference type="NCBI Taxonomy" id="316057"/>
    <lineage>
        <taxon>Bacteria</taxon>
        <taxon>Pseudomonadati</taxon>
        <taxon>Pseudomonadota</taxon>
        <taxon>Alphaproteobacteria</taxon>
        <taxon>Hyphomicrobiales</taxon>
        <taxon>Nitrobacteraceae</taxon>
        <taxon>Rhodopseudomonas</taxon>
    </lineage>
</organism>
<reference key="1">
    <citation type="submission" date="2006-03" db="EMBL/GenBank/DDBJ databases">
        <title>Complete sequence of Rhodopseudomonas palustris BisB5.</title>
        <authorList>
            <consortium name="US DOE Joint Genome Institute"/>
            <person name="Copeland A."/>
            <person name="Lucas S."/>
            <person name="Lapidus A."/>
            <person name="Barry K."/>
            <person name="Detter J.C."/>
            <person name="Glavina del Rio T."/>
            <person name="Hammon N."/>
            <person name="Israni S."/>
            <person name="Dalin E."/>
            <person name="Tice H."/>
            <person name="Pitluck S."/>
            <person name="Chain P."/>
            <person name="Malfatti S."/>
            <person name="Shin M."/>
            <person name="Vergez L."/>
            <person name="Schmutz J."/>
            <person name="Larimer F."/>
            <person name="Land M."/>
            <person name="Hauser L."/>
            <person name="Pelletier D.A."/>
            <person name="Kyrpides N."/>
            <person name="Lykidis A."/>
            <person name="Oda Y."/>
            <person name="Harwood C.S."/>
            <person name="Richardson P."/>
        </authorList>
    </citation>
    <scope>NUCLEOTIDE SEQUENCE [LARGE SCALE GENOMIC DNA]</scope>
    <source>
        <strain>BisB5</strain>
    </source>
</reference>
<keyword id="KW-0012">Acyltransferase</keyword>
<keyword id="KW-0028">Amino-acid biosynthesis</keyword>
<keyword id="KW-0963">Cytoplasm</keyword>
<keyword id="KW-0220">Diaminopimelate biosynthesis</keyword>
<keyword id="KW-0457">Lysine biosynthesis</keyword>
<keyword id="KW-0677">Repeat</keyword>
<keyword id="KW-0808">Transferase</keyword>
<proteinExistence type="inferred from homology"/>
<dbReference type="EC" id="2.3.1.117" evidence="1"/>
<dbReference type="EMBL" id="CP000283">
    <property type="protein sequence ID" value="ABE37315.1"/>
    <property type="molecule type" value="Genomic_DNA"/>
</dbReference>
<dbReference type="SMR" id="Q13F24"/>
<dbReference type="STRING" id="316057.RPD_0075"/>
<dbReference type="KEGG" id="rpd:RPD_0075"/>
<dbReference type="eggNOG" id="COG2171">
    <property type="taxonomic scope" value="Bacteria"/>
</dbReference>
<dbReference type="HOGENOM" id="CLU_050859_0_1_5"/>
<dbReference type="BioCyc" id="RPAL316057:RPD_RS00375-MONOMER"/>
<dbReference type="UniPathway" id="UPA00034">
    <property type="reaction ID" value="UER00019"/>
</dbReference>
<dbReference type="Proteomes" id="UP000001818">
    <property type="component" value="Chromosome"/>
</dbReference>
<dbReference type="GO" id="GO:0005737">
    <property type="term" value="C:cytoplasm"/>
    <property type="evidence" value="ECO:0007669"/>
    <property type="project" value="UniProtKB-SubCell"/>
</dbReference>
<dbReference type="GO" id="GO:0008666">
    <property type="term" value="F:2,3,4,5-tetrahydropyridine-2,6-dicarboxylate N-succinyltransferase activity"/>
    <property type="evidence" value="ECO:0007669"/>
    <property type="project" value="UniProtKB-UniRule"/>
</dbReference>
<dbReference type="GO" id="GO:0016779">
    <property type="term" value="F:nucleotidyltransferase activity"/>
    <property type="evidence" value="ECO:0007669"/>
    <property type="project" value="TreeGrafter"/>
</dbReference>
<dbReference type="GO" id="GO:0019877">
    <property type="term" value="P:diaminopimelate biosynthetic process"/>
    <property type="evidence" value="ECO:0007669"/>
    <property type="project" value="UniProtKB-UniRule"/>
</dbReference>
<dbReference type="GO" id="GO:0009089">
    <property type="term" value="P:lysine biosynthetic process via diaminopimelate"/>
    <property type="evidence" value="ECO:0007669"/>
    <property type="project" value="UniProtKB-UniRule"/>
</dbReference>
<dbReference type="CDD" id="cd03350">
    <property type="entry name" value="LbH_THP_succinylT"/>
    <property type="match status" value="1"/>
</dbReference>
<dbReference type="Gene3D" id="2.160.10.10">
    <property type="entry name" value="Hexapeptide repeat proteins"/>
    <property type="match status" value="1"/>
</dbReference>
<dbReference type="Gene3D" id="1.10.166.10">
    <property type="entry name" value="Tetrahydrodipicolinate-N-succinyltransferase, N-terminal domain"/>
    <property type="match status" value="1"/>
</dbReference>
<dbReference type="HAMAP" id="MF_00811">
    <property type="entry name" value="DapD"/>
    <property type="match status" value="1"/>
</dbReference>
<dbReference type="InterPro" id="IPR005664">
    <property type="entry name" value="DapD_Trfase_Hexpep_rpt_fam"/>
</dbReference>
<dbReference type="InterPro" id="IPR001451">
    <property type="entry name" value="Hexapep"/>
</dbReference>
<dbReference type="InterPro" id="IPR023180">
    <property type="entry name" value="THP_succinylTrfase_dom1"/>
</dbReference>
<dbReference type="InterPro" id="IPR037133">
    <property type="entry name" value="THP_succinylTrfase_N_sf"/>
</dbReference>
<dbReference type="InterPro" id="IPR011004">
    <property type="entry name" value="Trimer_LpxA-like_sf"/>
</dbReference>
<dbReference type="NCBIfam" id="TIGR00965">
    <property type="entry name" value="dapD"/>
    <property type="match status" value="1"/>
</dbReference>
<dbReference type="NCBIfam" id="NF008808">
    <property type="entry name" value="PRK11830.1"/>
    <property type="match status" value="1"/>
</dbReference>
<dbReference type="PANTHER" id="PTHR19136:SF52">
    <property type="entry name" value="2,3,4,5-TETRAHYDROPYRIDINE-2,6-DICARBOXYLATE N-SUCCINYLTRANSFERASE"/>
    <property type="match status" value="1"/>
</dbReference>
<dbReference type="PANTHER" id="PTHR19136">
    <property type="entry name" value="MOLYBDENUM COFACTOR GUANYLYLTRANSFERASE"/>
    <property type="match status" value="1"/>
</dbReference>
<dbReference type="Pfam" id="PF14602">
    <property type="entry name" value="Hexapep_2"/>
    <property type="match status" value="1"/>
</dbReference>
<dbReference type="Pfam" id="PF14805">
    <property type="entry name" value="THDPS_N_2"/>
    <property type="match status" value="1"/>
</dbReference>
<dbReference type="SUPFAM" id="SSF51161">
    <property type="entry name" value="Trimeric LpxA-like enzymes"/>
    <property type="match status" value="1"/>
</dbReference>
<comment type="catalytic activity">
    <reaction evidence="1">
        <text>(S)-2,3,4,5-tetrahydrodipicolinate + succinyl-CoA + H2O = (S)-2-succinylamino-6-oxoheptanedioate + CoA</text>
        <dbReference type="Rhea" id="RHEA:17325"/>
        <dbReference type="ChEBI" id="CHEBI:15377"/>
        <dbReference type="ChEBI" id="CHEBI:15685"/>
        <dbReference type="ChEBI" id="CHEBI:16845"/>
        <dbReference type="ChEBI" id="CHEBI:57287"/>
        <dbReference type="ChEBI" id="CHEBI:57292"/>
        <dbReference type="EC" id="2.3.1.117"/>
    </reaction>
</comment>
<comment type="pathway">
    <text evidence="1">Amino-acid biosynthesis; L-lysine biosynthesis via DAP pathway; LL-2,6-diaminopimelate from (S)-tetrahydrodipicolinate (succinylase route): step 1/3.</text>
</comment>
<comment type="subunit">
    <text evidence="1">Homotrimer.</text>
</comment>
<comment type="subcellular location">
    <subcellularLocation>
        <location evidence="1">Cytoplasm</location>
    </subcellularLocation>
</comment>
<comment type="similarity">
    <text evidence="1">Belongs to the transferase hexapeptide repeat family.</text>
</comment>
<name>DAPD_RHOPS</name>
<accession>Q13F24</accession>
<sequence length="281" mass="29881">MSLSALENTINTAFDARDTISAATKGEVRDAVDQALDLLDRGEARVAERDASGTWTVNQWLKKAVLLSFRLNDMHTIAGGPGGATWWDKVPSKFEGWGESRFREAGFRAVPGAIVRRSAFIAKNAVLMPSFVNLGAYVDEATMVDTWSTVGSCAQIGKRVHISGGVGIGGVLEPLQAGPVIIEDDCFIGARSEVAEGVIVRRGAVLAMGVFLGASTKIVDRETGEVFIGEVPEYAVLVPGALPGKPLKNGTPGPSTACAVIVKRVDERTRSKTSINELLRD</sequence>